<accession>C5CUN1</accession>
<keyword id="KW-0223">Dioxygenase</keyword>
<keyword id="KW-0408">Iron</keyword>
<keyword id="KW-0479">Metal-binding</keyword>
<keyword id="KW-0560">Oxidoreductase</keyword>
<keyword id="KW-0847">Vitamin C</keyword>
<gene>
    <name type="ordered locus">Vapar_1809</name>
</gene>
<feature type="chain" id="PRO_1000212444" description="PKHD-type hydroxylase Vapar_1809">
    <location>
        <begin position="1"/>
        <end position="228"/>
    </location>
</feature>
<feature type="domain" description="Fe2OG dioxygenase" evidence="1">
    <location>
        <begin position="78"/>
        <end position="179"/>
    </location>
</feature>
<feature type="binding site" evidence="1">
    <location>
        <position position="97"/>
    </location>
    <ligand>
        <name>Fe cation</name>
        <dbReference type="ChEBI" id="CHEBI:24875"/>
    </ligand>
</feature>
<feature type="binding site" evidence="1">
    <location>
        <position position="99"/>
    </location>
    <ligand>
        <name>Fe cation</name>
        <dbReference type="ChEBI" id="CHEBI:24875"/>
    </ligand>
</feature>
<feature type="binding site" evidence="1">
    <location>
        <position position="160"/>
    </location>
    <ligand>
        <name>Fe cation</name>
        <dbReference type="ChEBI" id="CHEBI:24875"/>
    </ligand>
</feature>
<feature type="binding site" evidence="1">
    <location>
        <position position="170"/>
    </location>
    <ligand>
        <name>2-oxoglutarate</name>
        <dbReference type="ChEBI" id="CHEBI:16810"/>
    </ligand>
</feature>
<proteinExistence type="inferred from homology"/>
<sequence>MLLHIKQVLTSEELREARGILADAPWGDGRITAGSQSAHAKNNEQLREDCEETRALQQLLLRGLERHQLFFSAALPKQISPPLFNRYGGASNSFGNHVDSAVRFLRDGSGRVRTDISCTLFLAGPDEYDGGELVIEDTFGVQRVKLPAGDMVLYPGTSVHRVLPVTRGYRTASYFWIQSMVRSDEQRRLLFEMDNHLRHLRSQYGETDSGVIGLTSTYHNLLRMWLDV</sequence>
<organism>
    <name type="scientific">Variovorax paradoxus (strain S110)</name>
    <dbReference type="NCBI Taxonomy" id="543728"/>
    <lineage>
        <taxon>Bacteria</taxon>
        <taxon>Pseudomonadati</taxon>
        <taxon>Pseudomonadota</taxon>
        <taxon>Betaproteobacteria</taxon>
        <taxon>Burkholderiales</taxon>
        <taxon>Comamonadaceae</taxon>
        <taxon>Variovorax</taxon>
    </lineage>
</organism>
<name>Y1809_VARPS</name>
<reference key="1">
    <citation type="journal article" date="2011" name="J. Bacteriol.">
        <title>Complete genome sequence of the metabolically versatile plant growth-promoting endophyte, Variovorax paradoxus S110.</title>
        <authorList>
            <person name="Han J.I."/>
            <person name="Choi H.K."/>
            <person name="Lee S.W."/>
            <person name="Orwin P.M."/>
            <person name="Kim J."/>
            <person name="Laroe S.L."/>
            <person name="Kim T.G."/>
            <person name="O'Neil J."/>
            <person name="Leadbetter J.R."/>
            <person name="Lee S.Y."/>
            <person name="Hur C.G."/>
            <person name="Spain J.C."/>
            <person name="Ovchinnikova G."/>
            <person name="Goodwin L."/>
            <person name="Han C."/>
        </authorList>
    </citation>
    <scope>NUCLEOTIDE SEQUENCE [LARGE SCALE GENOMIC DNA]</scope>
    <source>
        <strain>S110</strain>
    </source>
</reference>
<comment type="cofactor">
    <cofactor evidence="1">
        <name>Fe(2+)</name>
        <dbReference type="ChEBI" id="CHEBI:29033"/>
    </cofactor>
    <text evidence="1">Binds 1 Fe(2+) ion per subunit.</text>
</comment>
<comment type="cofactor">
    <cofactor evidence="1">
        <name>L-ascorbate</name>
        <dbReference type="ChEBI" id="CHEBI:38290"/>
    </cofactor>
</comment>
<protein>
    <recommendedName>
        <fullName evidence="1">PKHD-type hydroxylase Vapar_1809</fullName>
        <ecNumber evidence="1">1.14.11.-</ecNumber>
    </recommendedName>
</protein>
<dbReference type="EC" id="1.14.11.-" evidence="1"/>
<dbReference type="EMBL" id="CP001635">
    <property type="protein sequence ID" value="ACS18459.1"/>
    <property type="molecule type" value="Genomic_DNA"/>
</dbReference>
<dbReference type="SMR" id="C5CUN1"/>
<dbReference type="STRING" id="543728.Vapar_1809"/>
<dbReference type="KEGG" id="vap:Vapar_1809"/>
<dbReference type="eggNOG" id="COG3128">
    <property type="taxonomic scope" value="Bacteria"/>
</dbReference>
<dbReference type="HOGENOM" id="CLU_106663_0_0_4"/>
<dbReference type="OrthoDB" id="9812472at2"/>
<dbReference type="GO" id="GO:0016706">
    <property type="term" value="F:2-oxoglutarate-dependent dioxygenase activity"/>
    <property type="evidence" value="ECO:0007669"/>
    <property type="project" value="UniProtKB-UniRule"/>
</dbReference>
<dbReference type="GO" id="GO:0005506">
    <property type="term" value="F:iron ion binding"/>
    <property type="evidence" value="ECO:0007669"/>
    <property type="project" value="UniProtKB-UniRule"/>
</dbReference>
<dbReference type="GO" id="GO:0031418">
    <property type="term" value="F:L-ascorbic acid binding"/>
    <property type="evidence" value="ECO:0007669"/>
    <property type="project" value="UniProtKB-KW"/>
</dbReference>
<dbReference type="GO" id="GO:0006974">
    <property type="term" value="P:DNA damage response"/>
    <property type="evidence" value="ECO:0007669"/>
    <property type="project" value="TreeGrafter"/>
</dbReference>
<dbReference type="GO" id="GO:0006879">
    <property type="term" value="P:intracellular iron ion homeostasis"/>
    <property type="evidence" value="ECO:0007669"/>
    <property type="project" value="TreeGrafter"/>
</dbReference>
<dbReference type="Gene3D" id="2.60.120.620">
    <property type="entry name" value="q2cbj1_9rhob like domain"/>
    <property type="match status" value="1"/>
</dbReference>
<dbReference type="Gene3D" id="4.10.860.20">
    <property type="entry name" value="Rabenosyn, Rab binding domain"/>
    <property type="match status" value="1"/>
</dbReference>
<dbReference type="HAMAP" id="MF_00657">
    <property type="entry name" value="Hydroxyl_YbiX"/>
    <property type="match status" value="1"/>
</dbReference>
<dbReference type="InterPro" id="IPR005123">
    <property type="entry name" value="Oxoglu/Fe-dep_dioxygenase_dom"/>
</dbReference>
<dbReference type="InterPro" id="IPR041097">
    <property type="entry name" value="PKHD_C"/>
</dbReference>
<dbReference type="InterPro" id="IPR023550">
    <property type="entry name" value="PKHD_hydroxylase"/>
</dbReference>
<dbReference type="InterPro" id="IPR006620">
    <property type="entry name" value="Pro_4_hyd_alph"/>
</dbReference>
<dbReference type="InterPro" id="IPR044862">
    <property type="entry name" value="Pro_4_hyd_alph_FE2OG_OXY"/>
</dbReference>
<dbReference type="NCBIfam" id="NF003974">
    <property type="entry name" value="PRK05467.1-3"/>
    <property type="match status" value="1"/>
</dbReference>
<dbReference type="NCBIfam" id="NF003975">
    <property type="entry name" value="PRK05467.1-4"/>
    <property type="match status" value="1"/>
</dbReference>
<dbReference type="PANTHER" id="PTHR41536">
    <property type="entry name" value="PKHD-TYPE HYDROXYLASE YBIX"/>
    <property type="match status" value="1"/>
</dbReference>
<dbReference type="PANTHER" id="PTHR41536:SF1">
    <property type="entry name" value="PKHD-TYPE HYDROXYLASE YBIX"/>
    <property type="match status" value="1"/>
</dbReference>
<dbReference type="Pfam" id="PF13640">
    <property type="entry name" value="2OG-FeII_Oxy_3"/>
    <property type="match status" value="1"/>
</dbReference>
<dbReference type="Pfam" id="PF18331">
    <property type="entry name" value="PKHD_C"/>
    <property type="match status" value="1"/>
</dbReference>
<dbReference type="SMART" id="SM00702">
    <property type="entry name" value="P4Hc"/>
    <property type="match status" value="1"/>
</dbReference>
<dbReference type="PROSITE" id="PS51471">
    <property type="entry name" value="FE2OG_OXY"/>
    <property type="match status" value="1"/>
</dbReference>
<evidence type="ECO:0000255" key="1">
    <source>
        <dbReference type="HAMAP-Rule" id="MF_00657"/>
    </source>
</evidence>